<accession>B9DTR8</accession>
<name>Y399_STRU0</name>
<protein>
    <recommendedName>
        <fullName evidence="1">UPF0154 protein SUB0399</fullName>
    </recommendedName>
</protein>
<proteinExistence type="inferred from homology"/>
<dbReference type="EMBL" id="AM946015">
    <property type="protein sequence ID" value="CAR41035.1"/>
    <property type="molecule type" value="Genomic_DNA"/>
</dbReference>
<dbReference type="RefSeq" id="WP_012657934.1">
    <property type="nucleotide sequence ID" value="NC_012004.1"/>
</dbReference>
<dbReference type="SMR" id="B9DTR8"/>
<dbReference type="STRING" id="218495.SUB0399"/>
<dbReference type="KEGG" id="sub:SUB0399"/>
<dbReference type="eggNOG" id="COG3763">
    <property type="taxonomic scope" value="Bacteria"/>
</dbReference>
<dbReference type="HOGENOM" id="CLU_180108_0_0_9"/>
<dbReference type="OrthoDB" id="1769076at2"/>
<dbReference type="Proteomes" id="UP000000449">
    <property type="component" value="Chromosome"/>
</dbReference>
<dbReference type="GO" id="GO:0005886">
    <property type="term" value="C:plasma membrane"/>
    <property type="evidence" value="ECO:0007669"/>
    <property type="project" value="UniProtKB-SubCell"/>
</dbReference>
<dbReference type="HAMAP" id="MF_00363">
    <property type="entry name" value="UPF0154"/>
    <property type="match status" value="1"/>
</dbReference>
<dbReference type="InterPro" id="IPR005359">
    <property type="entry name" value="UPF0154"/>
</dbReference>
<dbReference type="Pfam" id="PF03672">
    <property type="entry name" value="UPF0154"/>
    <property type="match status" value="1"/>
</dbReference>
<keyword id="KW-1003">Cell membrane</keyword>
<keyword id="KW-0472">Membrane</keyword>
<keyword id="KW-1185">Reference proteome</keyword>
<keyword id="KW-0812">Transmembrane</keyword>
<keyword id="KW-1133">Transmembrane helix</keyword>
<sequence>MSTAIWILLIVLALIGGLFGGVFIARKQIEKEIGEHPRLTPEAIREMMSQMGQKPSEAKIQQTYRNIVKQSKAAAAKGK</sequence>
<gene>
    <name type="ordered locus">SUB0399</name>
</gene>
<feature type="chain" id="PRO_1000197735" description="UPF0154 protein SUB0399">
    <location>
        <begin position="1"/>
        <end position="79"/>
    </location>
</feature>
<feature type="transmembrane region" description="Helical" evidence="1">
    <location>
        <begin position="4"/>
        <end position="24"/>
    </location>
</feature>
<reference key="1">
    <citation type="journal article" date="2009" name="BMC Genomics">
        <title>Evidence for niche adaptation in the genome of the bovine pathogen Streptococcus uberis.</title>
        <authorList>
            <person name="Ward P.N."/>
            <person name="Holden M.T.G."/>
            <person name="Leigh J.A."/>
            <person name="Lennard N."/>
            <person name="Bignell A."/>
            <person name="Barron A."/>
            <person name="Clark L."/>
            <person name="Quail M.A."/>
            <person name="Woodward J."/>
            <person name="Barrell B.G."/>
            <person name="Egan S.A."/>
            <person name="Field T.R."/>
            <person name="Maskell D."/>
            <person name="Kehoe M."/>
            <person name="Dowson C.G."/>
            <person name="Chanter N."/>
            <person name="Whatmore A.M."/>
            <person name="Bentley S.D."/>
            <person name="Parkhill J."/>
        </authorList>
    </citation>
    <scope>NUCLEOTIDE SEQUENCE [LARGE SCALE GENOMIC DNA]</scope>
    <source>
        <strain>ATCC BAA-854 / 0140J</strain>
    </source>
</reference>
<evidence type="ECO:0000255" key="1">
    <source>
        <dbReference type="HAMAP-Rule" id="MF_00363"/>
    </source>
</evidence>
<comment type="subcellular location">
    <subcellularLocation>
        <location evidence="1">Cell membrane</location>
        <topology evidence="1">Single-pass membrane protein</topology>
    </subcellularLocation>
</comment>
<comment type="similarity">
    <text evidence="1">Belongs to the UPF0154 family.</text>
</comment>
<organism>
    <name type="scientific">Streptococcus uberis (strain ATCC BAA-854 / 0140J)</name>
    <dbReference type="NCBI Taxonomy" id="218495"/>
    <lineage>
        <taxon>Bacteria</taxon>
        <taxon>Bacillati</taxon>
        <taxon>Bacillota</taxon>
        <taxon>Bacilli</taxon>
        <taxon>Lactobacillales</taxon>
        <taxon>Streptococcaceae</taxon>
        <taxon>Streptococcus</taxon>
    </lineage>
</organism>